<reference key="1">
    <citation type="journal article" date="2008" name="J. Bacteriol.">
        <title>The complete genome sequence of Escherichia coli DH10B: insights into the biology of a laboratory workhorse.</title>
        <authorList>
            <person name="Durfee T."/>
            <person name="Nelson R."/>
            <person name="Baldwin S."/>
            <person name="Plunkett G. III"/>
            <person name="Burland V."/>
            <person name="Mau B."/>
            <person name="Petrosino J.F."/>
            <person name="Qin X."/>
            <person name="Muzny D.M."/>
            <person name="Ayele M."/>
            <person name="Gibbs R.A."/>
            <person name="Csorgo B."/>
            <person name="Posfai G."/>
            <person name="Weinstock G.M."/>
            <person name="Blattner F.R."/>
        </authorList>
    </citation>
    <scope>NUCLEOTIDE SEQUENCE [LARGE SCALE GENOMIC DNA]</scope>
    <source>
        <strain>K12 / DH10B</strain>
    </source>
</reference>
<comment type="function">
    <text evidence="1">Catalyzes the desulfonation of aliphatic sulfonates.</text>
</comment>
<comment type="catalytic activity">
    <reaction evidence="1">
        <text>an alkanesulfonate + FMNH2 + O2 = an aldehyde + FMN + sulfite + H2O + 2 H(+)</text>
        <dbReference type="Rhea" id="RHEA:23064"/>
        <dbReference type="ChEBI" id="CHEBI:15377"/>
        <dbReference type="ChEBI" id="CHEBI:15378"/>
        <dbReference type="ChEBI" id="CHEBI:15379"/>
        <dbReference type="ChEBI" id="CHEBI:17359"/>
        <dbReference type="ChEBI" id="CHEBI:17478"/>
        <dbReference type="ChEBI" id="CHEBI:57618"/>
        <dbReference type="ChEBI" id="CHEBI:58210"/>
        <dbReference type="ChEBI" id="CHEBI:134249"/>
        <dbReference type="EC" id="1.14.14.5"/>
    </reaction>
</comment>
<comment type="subunit">
    <text evidence="1">Homotetramer.</text>
</comment>
<comment type="miscellaneous">
    <text evidence="1">FMNH(2) which is absolutely required for this enzymatic reaction, is provided by SsuE.</text>
</comment>
<comment type="similarity">
    <text evidence="1">Belongs to the SsuD family.</text>
</comment>
<dbReference type="EC" id="1.14.14.5" evidence="1"/>
<dbReference type="EMBL" id="CP000948">
    <property type="protein sequence ID" value="ACB02135.1"/>
    <property type="molecule type" value="Genomic_DNA"/>
</dbReference>
<dbReference type="RefSeq" id="WP_000056006.1">
    <property type="nucleotide sequence ID" value="NC_010473.1"/>
</dbReference>
<dbReference type="SMR" id="B1X8N9"/>
<dbReference type="KEGG" id="ecd:ECDH10B_1005"/>
<dbReference type="HOGENOM" id="CLU_027853_1_0_6"/>
<dbReference type="GO" id="GO:0008726">
    <property type="term" value="F:alkanesulfonate monooxygenase activity"/>
    <property type="evidence" value="ECO:0007669"/>
    <property type="project" value="UniProtKB-UniRule"/>
</dbReference>
<dbReference type="GO" id="GO:0046306">
    <property type="term" value="P:alkanesulfonate catabolic process"/>
    <property type="evidence" value="ECO:0007669"/>
    <property type="project" value="TreeGrafter"/>
</dbReference>
<dbReference type="CDD" id="cd01094">
    <property type="entry name" value="Alkanesulfonate_monoxygenase"/>
    <property type="match status" value="1"/>
</dbReference>
<dbReference type="FunFam" id="3.20.20.30:FF:000001">
    <property type="entry name" value="Alkanesulfonate monooxygenase"/>
    <property type="match status" value="1"/>
</dbReference>
<dbReference type="Gene3D" id="3.20.20.30">
    <property type="entry name" value="Luciferase-like domain"/>
    <property type="match status" value="1"/>
</dbReference>
<dbReference type="HAMAP" id="MF_01229">
    <property type="entry name" value="Alkanesulf_monooxygen"/>
    <property type="match status" value="1"/>
</dbReference>
<dbReference type="InterPro" id="IPR019911">
    <property type="entry name" value="Alkanesulphonate_mOase_FMN-dep"/>
</dbReference>
<dbReference type="InterPro" id="IPR011251">
    <property type="entry name" value="Luciferase-like_dom"/>
</dbReference>
<dbReference type="InterPro" id="IPR036661">
    <property type="entry name" value="Luciferase-like_sf"/>
</dbReference>
<dbReference type="InterPro" id="IPR050172">
    <property type="entry name" value="SsuD_RutA_monooxygenase"/>
</dbReference>
<dbReference type="NCBIfam" id="TIGR03565">
    <property type="entry name" value="alk_sulf_monoox"/>
    <property type="match status" value="1"/>
</dbReference>
<dbReference type="NCBIfam" id="NF001939">
    <property type="entry name" value="PRK00719.1"/>
    <property type="match status" value="1"/>
</dbReference>
<dbReference type="PANTHER" id="PTHR42847">
    <property type="entry name" value="ALKANESULFONATE MONOOXYGENASE"/>
    <property type="match status" value="1"/>
</dbReference>
<dbReference type="PANTHER" id="PTHR42847:SF4">
    <property type="entry name" value="ALKANESULFONATE MONOOXYGENASE-RELATED"/>
    <property type="match status" value="1"/>
</dbReference>
<dbReference type="Pfam" id="PF00296">
    <property type="entry name" value="Bac_luciferase"/>
    <property type="match status" value="1"/>
</dbReference>
<dbReference type="SUPFAM" id="SSF51679">
    <property type="entry name" value="Bacterial luciferase-like"/>
    <property type="match status" value="1"/>
</dbReference>
<gene>
    <name evidence="1" type="primary">ssuD</name>
    <name type="ordered locus">ECDH10B_1005</name>
</gene>
<organism>
    <name type="scientific">Escherichia coli (strain K12 / DH10B)</name>
    <dbReference type="NCBI Taxonomy" id="316385"/>
    <lineage>
        <taxon>Bacteria</taxon>
        <taxon>Pseudomonadati</taxon>
        <taxon>Pseudomonadota</taxon>
        <taxon>Gammaproteobacteria</taxon>
        <taxon>Enterobacterales</taxon>
        <taxon>Enterobacteriaceae</taxon>
        <taxon>Escherichia</taxon>
    </lineage>
</organism>
<accession>B1X8N9</accession>
<name>SSUD_ECODH</name>
<protein>
    <recommendedName>
        <fullName evidence="1">Alkanesulfonate monooxygenase</fullName>
        <ecNumber evidence="1">1.14.14.5</ecNumber>
    </recommendedName>
    <alternativeName>
        <fullName evidence="1">FMNH2-dependent aliphatic sulfonate monooxygenase</fullName>
    </alternativeName>
</protein>
<evidence type="ECO:0000255" key="1">
    <source>
        <dbReference type="HAMAP-Rule" id="MF_01229"/>
    </source>
</evidence>
<keyword id="KW-0285">Flavoprotein</keyword>
<keyword id="KW-0288">FMN</keyword>
<keyword id="KW-0503">Monooxygenase</keyword>
<keyword id="KW-0560">Oxidoreductase</keyword>
<sequence>MSLNMFWFLPTHGDGHYLGTEEGSRPVDHGYLQQIAQAADRLGYTGVLIPTGRSCEDAWLVAASMIPVTQRLKFLVALRPSVTSPTVAARQAATLDRLSNGRALFNLVTGSDPQELAGDGVFLDHSERYEASAEFTQVWRRLLQRETVDFNGKHIHVRGAKLLFPAIQQPYPPLYFGGSSDVAQELAAEQVDLYLTWGEPPELVKEKIEQVRAKAAAHGRKIRFGIRLHVIVRETNDEAWQAAERLISHLDDETIAKAQAAFARTDSVGQQRMAALHNGKRDNLEISPNLWAGVGLVRGGAGTALVGDGPTVAARINEYAALGIDSFVLSGYPHLEEAYRVGELLFPLLDVAIPEIPQPQPLNPQGEAVANDFIPRKVAQS</sequence>
<proteinExistence type="inferred from homology"/>
<feature type="chain" id="PRO_1000139620" description="Alkanesulfonate monooxygenase">
    <location>
        <begin position="1"/>
        <end position="381"/>
    </location>
</feature>